<keyword id="KW-0067">ATP-binding</keyword>
<keyword id="KW-0072">Autophagy</keyword>
<keyword id="KW-0963">Cytoplasm</keyword>
<keyword id="KW-0418">Kinase</keyword>
<keyword id="KW-0472">Membrane</keyword>
<keyword id="KW-0547">Nucleotide-binding</keyword>
<keyword id="KW-0653">Protein transport</keyword>
<keyword id="KW-1185">Reference proteome</keyword>
<keyword id="KW-0723">Serine/threonine-protein kinase</keyword>
<keyword id="KW-0808">Transferase</keyword>
<keyword id="KW-0813">Transport</keyword>
<organism>
    <name type="scientific">Aspergillus clavatus (strain ATCC 1007 / CBS 513.65 / DSM 816 / NCTC 3887 / NRRL 1 / QM 1276 / 107)</name>
    <dbReference type="NCBI Taxonomy" id="344612"/>
    <lineage>
        <taxon>Eukaryota</taxon>
        <taxon>Fungi</taxon>
        <taxon>Dikarya</taxon>
        <taxon>Ascomycota</taxon>
        <taxon>Pezizomycotina</taxon>
        <taxon>Eurotiomycetes</taxon>
        <taxon>Eurotiomycetidae</taxon>
        <taxon>Eurotiales</taxon>
        <taxon>Aspergillaceae</taxon>
        <taxon>Aspergillus</taxon>
        <taxon>Aspergillus subgen. Fumigati</taxon>
    </lineage>
</organism>
<feature type="chain" id="PRO_0000317787" description="Serine/threonine-protein kinase atg1">
    <location>
        <begin position="1"/>
        <end position="928"/>
    </location>
</feature>
<feature type="domain" description="Protein kinase" evidence="2">
    <location>
        <begin position="6"/>
        <end position="315"/>
    </location>
</feature>
<feature type="region of interest" description="Disordered" evidence="4">
    <location>
        <begin position="318"/>
        <end position="470"/>
    </location>
</feature>
<feature type="region of interest" description="Disordered" evidence="4">
    <location>
        <begin position="544"/>
        <end position="571"/>
    </location>
</feature>
<feature type="compositionally biased region" description="Basic and acidic residues" evidence="4">
    <location>
        <begin position="359"/>
        <end position="371"/>
    </location>
</feature>
<feature type="compositionally biased region" description="Polar residues" evidence="4">
    <location>
        <begin position="437"/>
        <end position="452"/>
    </location>
</feature>
<feature type="compositionally biased region" description="Basic and acidic residues" evidence="4">
    <location>
        <begin position="459"/>
        <end position="470"/>
    </location>
</feature>
<feature type="compositionally biased region" description="Basic and acidic residues" evidence="4">
    <location>
        <begin position="548"/>
        <end position="564"/>
    </location>
</feature>
<feature type="active site" description="Proton acceptor" evidence="2 3">
    <location>
        <position position="149"/>
    </location>
</feature>
<feature type="binding site" evidence="2">
    <location>
        <begin position="12"/>
        <end position="20"/>
    </location>
    <ligand>
        <name>ATP</name>
        <dbReference type="ChEBI" id="CHEBI:30616"/>
    </ligand>
</feature>
<feature type="binding site" evidence="2">
    <location>
        <position position="35"/>
    </location>
    <ligand>
        <name>ATP</name>
        <dbReference type="ChEBI" id="CHEBI:30616"/>
    </ligand>
</feature>
<gene>
    <name evidence="1" type="primary">atg1</name>
    <name evidence="5" type="ORF">ACLA_048410</name>
</gene>
<accession>A1CHL6</accession>
<dbReference type="EC" id="2.7.11.1" evidence="1"/>
<dbReference type="EMBL" id="DS027054">
    <property type="protein sequence ID" value="EAW10371.1"/>
    <property type="molecule type" value="Genomic_DNA"/>
</dbReference>
<dbReference type="RefSeq" id="XP_001271797.1">
    <property type="nucleotide sequence ID" value="XM_001271796.1"/>
</dbReference>
<dbReference type="SMR" id="A1CHL6"/>
<dbReference type="STRING" id="344612.A1CHL6"/>
<dbReference type="EnsemblFungi" id="EAW10371">
    <property type="protein sequence ID" value="EAW10371"/>
    <property type="gene ID" value="ACLA_048410"/>
</dbReference>
<dbReference type="GeneID" id="4704065"/>
<dbReference type="KEGG" id="act:ACLA_048410"/>
<dbReference type="VEuPathDB" id="FungiDB:ACLA_048410"/>
<dbReference type="eggNOG" id="KOG0595">
    <property type="taxonomic scope" value="Eukaryota"/>
</dbReference>
<dbReference type="HOGENOM" id="CLU_006447_0_0_1"/>
<dbReference type="OMA" id="INNVVQW"/>
<dbReference type="OrthoDB" id="346907at2759"/>
<dbReference type="Proteomes" id="UP000006701">
    <property type="component" value="Unassembled WGS sequence"/>
</dbReference>
<dbReference type="GO" id="GO:1990316">
    <property type="term" value="C:Atg1/ULK1 kinase complex"/>
    <property type="evidence" value="ECO:0007669"/>
    <property type="project" value="EnsemblFungi"/>
</dbReference>
<dbReference type="GO" id="GO:0000421">
    <property type="term" value="C:autophagosome membrane"/>
    <property type="evidence" value="ECO:0007669"/>
    <property type="project" value="EnsemblFungi"/>
</dbReference>
<dbReference type="GO" id="GO:0005829">
    <property type="term" value="C:cytosol"/>
    <property type="evidence" value="ECO:0007669"/>
    <property type="project" value="EnsemblFungi"/>
</dbReference>
<dbReference type="GO" id="GO:0061908">
    <property type="term" value="C:phagophore"/>
    <property type="evidence" value="ECO:0007669"/>
    <property type="project" value="EnsemblFungi"/>
</dbReference>
<dbReference type="GO" id="GO:0034045">
    <property type="term" value="C:phagophore assembly site membrane"/>
    <property type="evidence" value="ECO:0007669"/>
    <property type="project" value="UniProtKB-SubCell"/>
</dbReference>
<dbReference type="GO" id="GO:0120095">
    <property type="term" value="C:vacuole-isolation membrane contact site"/>
    <property type="evidence" value="ECO:0007669"/>
    <property type="project" value="EnsemblFungi"/>
</dbReference>
<dbReference type="GO" id="GO:0005524">
    <property type="term" value="F:ATP binding"/>
    <property type="evidence" value="ECO:0007669"/>
    <property type="project" value="UniProtKB-KW"/>
</dbReference>
<dbReference type="GO" id="GO:0106310">
    <property type="term" value="F:protein serine kinase activity"/>
    <property type="evidence" value="ECO:0007669"/>
    <property type="project" value="RHEA"/>
</dbReference>
<dbReference type="GO" id="GO:0004674">
    <property type="term" value="F:protein serine/threonine kinase activity"/>
    <property type="evidence" value="ECO:0007669"/>
    <property type="project" value="UniProtKB-KW"/>
</dbReference>
<dbReference type="GO" id="GO:0000422">
    <property type="term" value="P:autophagy of mitochondrion"/>
    <property type="evidence" value="ECO:0007669"/>
    <property type="project" value="EnsemblFungi"/>
</dbReference>
<dbReference type="GO" id="GO:0006995">
    <property type="term" value="P:cellular response to nitrogen starvation"/>
    <property type="evidence" value="ECO:0007669"/>
    <property type="project" value="EnsemblFungi"/>
</dbReference>
<dbReference type="GO" id="GO:0051365">
    <property type="term" value="P:cellular response to potassium ion starvation"/>
    <property type="evidence" value="ECO:0007669"/>
    <property type="project" value="EnsemblFungi"/>
</dbReference>
<dbReference type="GO" id="GO:0034727">
    <property type="term" value="P:piecemeal microautophagy of the nucleus"/>
    <property type="evidence" value="ECO:0007669"/>
    <property type="project" value="EnsemblFungi"/>
</dbReference>
<dbReference type="GO" id="GO:0034497">
    <property type="term" value="P:protein localization to phagophore assembly site"/>
    <property type="evidence" value="ECO:0007669"/>
    <property type="project" value="EnsemblFungi"/>
</dbReference>
<dbReference type="GO" id="GO:0015031">
    <property type="term" value="P:protein transport"/>
    <property type="evidence" value="ECO:0007669"/>
    <property type="project" value="UniProtKB-KW"/>
</dbReference>
<dbReference type="GO" id="GO:0010506">
    <property type="term" value="P:regulation of autophagy"/>
    <property type="evidence" value="ECO:0007669"/>
    <property type="project" value="InterPro"/>
</dbReference>
<dbReference type="GO" id="GO:0061709">
    <property type="term" value="P:reticulophagy"/>
    <property type="evidence" value="ECO:0007669"/>
    <property type="project" value="EnsemblFungi"/>
</dbReference>
<dbReference type="CDD" id="cd14009">
    <property type="entry name" value="STKc_ATG1_ULK_like"/>
    <property type="match status" value="1"/>
</dbReference>
<dbReference type="FunFam" id="1.10.510.10:FF:000817">
    <property type="entry name" value="Serine/threonine-protein kinase ATG1"/>
    <property type="match status" value="1"/>
</dbReference>
<dbReference type="FunFam" id="3.30.200.20:FF:000399">
    <property type="entry name" value="Serine/threonine-protein kinase atg1"/>
    <property type="match status" value="1"/>
</dbReference>
<dbReference type="Gene3D" id="3.30.200.20">
    <property type="entry name" value="Phosphorylase Kinase, domain 1"/>
    <property type="match status" value="1"/>
</dbReference>
<dbReference type="Gene3D" id="1.10.510.10">
    <property type="entry name" value="Transferase(Phosphotransferase) domain 1"/>
    <property type="match status" value="1"/>
</dbReference>
<dbReference type="InterPro" id="IPR045269">
    <property type="entry name" value="Atg1-like"/>
</dbReference>
<dbReference type="InterPro" id="IPR048941">
    <property type="entry name" value="ATG1-like_MIT2"/>
</dbReference>
<dbReference type="InterPro" id="IPR022708">
    <property type="entry name" value="Atg1-like_tMIT"/>
</dbReference>
<dbReference type="InterPro" id="IPR011009">
    <property type="entry name" value="Kinase-like_dom_sf"/>
</dbReference>
<dbReference type="InterPro" id="IPR000719">
    <property type="entry name" value="Prot_kinase_dom"/>
</dbReference>
<dbReference type="InterPro" id="IPR017441">
    <property type="entry name" value="Protein_kinase_ATP_BS"/>
</dbReference>
<dbReference type="InterPro" id="IPR008271">
    <property type="entry name" value="Ser/Thr_kinase_AS"/>
</dbReference>
<dbReference type="PANTHER" id="PTHR24348:SF22">
    <property type="entry name" value="NON-SPECIFIC SERINE_THREONINE PROTEIN KINASE"/>
    <property type="match status" value="1"/>
</dbReference>
<dbReference type="PANTHER" id="PTHR24348">
    <property type="entry name" value="SERINE/THREONINE-PROTEIN KINASE UNC-51-RELATED"/>
    <property type="match status" value="1"/>
</dbReference>
<dbReference type="Pfam" id="PF12063">
    <property type="entry name" value="ATG1-like_MIT1"/>
    <property type="match status" value="1"/>
</dbReference>
<dbReference type="Pfam" id="PF21127">
    <property type="entry name" value="ATG1-like_MIT2"/>
    <property type="match status" value="1"/>
</dbReference>
<dbReference type="Pfam" id="PF00069">
    <property type="entry name" value="Pkinase"/>
    <property type="match status" value="1"/>
</dbReference>
<dbReference type="SMART" id="SM00220">
    <property type="entry name" value="S_TKc"/>
    <property type="match status" value="1"/>
</dbReference>
<dbReference type="SUPFAM" id="SSF56112">
    <property type="entry name" value="Protein kinase-like (PK-like)"/>
    <property type="match status" value="1"/>
</dbReference>
<dbReference type="PROSITE" id="PS00107">
    <property type="entry name" value="PROTEIN_KINASE_ATP"/>
    <property type="match status" value="1"/>
</dbReference>
<dbReference type="PROSITE" id="PS50011">
    <property type="entry name" value="PROTEIN_KINASE_DOM"/>
    <property type="match status" value="1"/>
</dbReference>
<dbReference type="PROSITE" id="PS00108">
    <property type="entry name" value="PROTEIN_KINASE_ST"/>
    <property type="match status" value="1"/>
</dbReference>
<sequence length="928" mass="101306">MSLGRYTRLDEIGRGSFATVYQGVHTKTGTYVAIKSVNLSKLNKKLKENLSSEIHILKGLYHPHIVALIDCQETSSHIHLVMEYCALGDLSLFIKRRDTLGDHRYTRDMIAKYPNPPGGALNEVVVRHFLKQLSSALKFLRDRNLIHRDIKPQNLLLCPSPSSYRSGAGSGAATVVPFKGCEDSFNPATGVDSLPLLKIADFGFARSLPATSLAETLCGSPLYMAPEILRYEKYDAKADLWSVGTVLYEMVVGKPPFRATNHVELLRKIEKGEDRIKFPEDNPASDAIKALIRALLKRNPVERLNFPEFFENEVITGPIPGLLADDQPSISRHRSVDPGTTEVPPRPDSRSGTSVPSGTRREREVNREDVYSPRSSPRNQKPSTPPTSTPMRRVGSTDRPPSAPKESEPPMAYPQRPNAVSHATAPGRQELLDRKATTTAIERQRSRNTYSEGSPRLDQPADKLKEEQERAAQDVAFERDYVVVEKRAVEVNAFADELAHSPRIQGGLSRAAQAGAISRRATVQGATPTLSSPQTTTGKAMQVFSGRSRADSTHHRQASYERRYGQSPTSATSAISKALNMASGRLFGMGFSPPLTITKGGRSPPLAYNPFPAYPTAHGSLMIIGDGAKSQVALDEDTKTVQVIEECATRSDVVYGFAEVKYKQLIPLAPSIQTDPSAKSNMSGVRDTAGSTDGDLTVDATVTLSEEALVLYVKALSLLAKSMDIAGVWWTRKNRGETFGDPVMSRADTTGALVGTRINNVVQWVRNRFNEVLEKAEFVRLKLIEGQKRLPPDHPSHPSNHSVTSSLGAGSTDIVVSSGVTAEKLMYDRALEMSRAAAINELTGEDLAGCEIAYVTAIRMLEAVLEDDEVPGLGPGKVDTSKDMYDGVPAEDRQVVVKLVSSIRGRLQALRKKLAILAKRAPTASVNV</sequence>
<reference key="1">
    <citation type="journal article" date="2008" name="PLoS Genet.">
        <title>Genomic islands in the pathogenic filamentous fungus Aspergillus fumigatus.</title>
        <authorList>
            <person name="Fedorova N.D."/>
            <person name="Khaldi N."/>
            <person name="Joardar V.S."/>
            <person name="Maiti R."/>
            <person name="Amedeo P."/>
            <person name="Anderson M.J."/>
            <person name="Crabtree J."/>
            <person name="Silva J.C."/>
            <person name="Badger J.H."/>
            <person name="Albarraq A."/>
            <person name="Angiuoli S."/>
            <person name="Bussey H."/>
            <person name="Bowyer P."/>
            <person name="Cotty P.J."/>
            <person name="Dyer P.S."/>
            <person name="Egan A."/>
            <person name="Galens K."/>
            <person name="Fraser-Liggett C.M."/>
            <person name="Haas B.J."/>
            <person name="Inman J.M."/>
            <person name="Kent R."/>
            <person name="Lemieux S."/>
            <person name="Malavazi I."/>
            <person name="Orvis J."/>
            <person name="Roemer T."/>
            <person name="Ronning C.M."/>
            <person name="Sundaram J.P."/>
            <person name="Sutton G."/>
            <person name="Turner G."/>
            <person name="Venter J.C."/>
            <person name="White O.R."/>
            <person name="Whitty B.R."/>
            <person name="Youngman P."/>
            <person name="Wolfe K.H."/>
            <person name="Goldman G.H."/>
            <person name="Wortman J.R."/>
            <person name="Jiang B."/>
            <person name="Denning D.W."/>
            <person name="Nierman W.C."/>
        </authorList>
    </citation>
    <scope>NUCLEOTIDE SEQUENCE [LARGE SCALE GENOMIC DNA]</scope>
    <source>
        <strain>ATCC 1007 / CBS 513.65 / DSM 816 / NCTC 3887 / NRRL 1 / QM 1276 / 107</strain>
    </source>
</reference>
<proteinExistence type="inferred from homology"/>
<evidence type="ECO:0000250" key="1">
    <source>
        <dbReference type="UniProtKB" id="P53104"/>
    </source>
</evidence>
<evidence type="ECO:0000255" key="2">
    <source>
        <dbReference type="PROSITE-ProRule" id="PRU00159"/>
    </source>
</evidence>
<evidence type="ECO:0000255" key="3">
    <source>
        <dbReference type="PROSITE-ProRule" id="PRU10027"/>
    </source>
</evidence>
<evidence type="ECO:0000256" key="4">
    <source>
        <dbReference type="SAM" id="MobiDB-lite"/>
    </source>
</evidence>
<evidence type="ECO:0000303" key="5">
    <source>
    </source>
</evidence>
<protein>
    <recommendedName>
        <fullName evidence="1">Serine/threonine-protein kinase atg1</fullName>
        <ecNumber evidence="1">2.7.11.1</ecNumber>
    </recommendedName>
    <alternativeName>
        <fullName evidence="1">Autophagy-related protein 1</fullName>
    </alternativeName>
</protein>
<comment type="function">
    <text evidence="1">Serine/threonine protein kinase involved in the cytoplasm to vacuole transport (Cvt) and found to be essential in autophagy, where it is required for the formation of autophagosomes. Involved in the clearance of protein aggregates which cannot be efficiently cleared by the proteasome. Required for selective autophagic degradation of the nucleus (nucleophagy) as well as for mitophagy which contributes to regulate mitochondrial quantity and quality by eliminating the mitochondria to a basal level to fulfill cellular energy requirements and preventing excess ROS production. Also involved in endoplasmic reticulum-specific autophagic process, in selective removal of ER-associated degradation (ERAD) substrates. Plays a key role in ATG9 and ATG23 cycling through the pre-autophagosomal structure and is necessary to promote ATG18 binding to ATG9 through phosphorylation of ATG9. Catalyzes phosphorylation of ATG4, decreasing the interaction between ATG4 and ATG8 and impairing deconjugation of PE-conjugated forms of ATG8.</text>
</comment>
<comment type="catalytic activity">
    <reaction evidence="1">
        <text>L-seryl-[protein] + ATP = O-phospho-L-seryl-[protein] + ADP + H(+)</text>
        <dbReference type="Rhea" id="RHEA:17989"/>
        <dbReference type="Rhea" id="RHEA-COMP:9863"/>
        <dbReference type="Rhea" id="RHEA-COMP:11604"/>
        <dbReference type="ChEBI" id="CHEBI:15378"/>
        <dbReference type="ChEBI" id="CHEBI:29999"/>
        <dbReference type="ChEBI" id="CHEBI:30616"/>
        <dbReference type="ChEBI" id="CHEBI:83421"/>
        <dbReference type="ChEBI" id="CHEBI:456216"/>
        <dbReference type="EC" id="2.7.11.1"/>
    </reaction>
</comment>
<comment type="catalytic activity">
    <reaction evidence="1">
        <text>L-threonyl-[protein] + ATP = O-phospho-L-threonyl-[protein] + ADP + H(+)</text>
        <dbReference type="Rhea" id="RHEA:46608"/>
        <dbReference type="Rhea" id="RHEA-COMP:11060"/>
        <dbReference type="Rhea" id="RHEA-COMP:11605"/>
        <dbReference type="ChEBI" id="CHEBI:15378"/>
        <dbReference type="ChEBI" id="CHEBI:30013"/>
        <dbReference type="ChEBI" id="CHEBI:30616"/>
        <dbReference type="ChEBI" id="CHEBI:61977"/>
        <dbReference type="ChEBI" id="CHEBI:456216"/>
        <dbReference type="EC" id="2.7.11.1"/>
    </reaction>
</comment>
<comment type="subunit">
    <text evidence="1">Homodimer. Forms a ternary complex with ATG13 and ATG17.</text>
</comment>
<comment type="subcellular location">
    <subcellularLocation>
        <location evidence="1">Cytoplasm</location>
    </subcellularLocation>
    <subcellularLocation>
        <location evidence="1">Preautophagosomal structure membrane</location>
        <topology evidence="1">Peripheral membrane protein</topology>
    </subcellularLocation>
</comment>
<comment type="similarity">
    <text evidence="2">Belongs to the protein kinase superfamily. Ser/Thr protein kinase family. APG1/unc-51/ULK1 subfamily.</text>
</comment>
<name>ATG1_ASPCL</name>